<organism>
    <name type="scientific">Haemophilus influenzae (strain PittGG)</name>
    <dbReference type="NCBI Taxonomy" id="374931"/>
    <lineage>
        <taxon>Bacteria</taxon>
        <taxon>Pseudomonadati</taxon>
        <taxon>Pseudomonadota</taxon>
        <taxon>Gammaproteobacteria</taxon>
        <taxon>Pasteurellales</taxon>
        <taxon>Pasteurellaceae</taxon>
        <taxon>Haemophilus</taxon>
    </lineage>
</organism>
<comment type="function">
    <text evidence="1">Binds directly to 23S ribosomal RNA and is necessary for the in vitro assembly process of the 50S ribosomal subunit. It is not involved in the protein synthesizing functions of that subunit.</text>
</comment>
<comment type="similarity">
    <text evidence="1">Belongs to the bacterial ribosomal protein bL20 family.</text>
</comment>
<proteinExistence type="inferred from homology"/>
<feature type="chain" id="PRO_1000048988" description="Large ribosomal subunit protein bL20">
    <location>
        <begin position="1"/>
        <end position="117"/>
    </location>
</feature>
<keyword id="KW-0687">Ribonucleoprotein</keyword>
<keyword id="KW-0689">Ribosomal protein</keyword>
<keyword id="KW-0694">RNA-binding</keyword>
<keyword id="KW-0699">rRNA-binding</keyword>
<accession>A5UEZ1</accession>
<name>RL20_HAEIG</name>
<sequence length="117" mass="13341">MARVKRGVIARARHKKVLKAAKGYYGARSRVYRVAFQAVIKAGQYAYRDRRQRKRQFRQLWIARINAAARQNGLSYSKFINGLKKASVEIDRKILADIAVFDKVAFAALVEKAKSAL</sequence>
<dbReference type="EMBL" id="CP000672">
    <property type="protein sequence ID" value="ABQ99346.1"/>
    <property type="molecule type" value="Genomic_DNA"/>
</dbReference>
<dbReference type="SMR" id="A5UEZ1"/>
<dbReference type="KEGG" id="hiq:CGSHiGG_01295"/>
<dbReference type="HOGENOM" id="CLU_123265_0_1_6"/>
<dbReference type="Proteomes" id="UP000001990">
    <property type="component" value="Chromosome"/>
</dbReference>
<dbReference type="GO" id="GO:1990904">
    <property type="term" value="C:ribonucleoprotein complex"/>
    <property type="evidence" value="ECO:0007669"/>
    <property type="project" value="UniProtKB-KW"/>
</dbReference>
<dbReference type="GO" id="GO:0005840">
    <property type="term" value="C:ribosome"/>
    <property type="evidence" value="ECO:0007669"/>
    <property type="project" value="UniProtKB-KW"/>
</dbReference>
<dbReference type="GO" id="GO:0019843">
    <property type="term" value="F:rRNA binding"/>
    <property type="evidence" value="ECO:0007669"/>
    <property type="project" value="UniProtKB-UniRule"/>
</dbReference>
<dbReference type="GO" id="GO:0003735">
    <property type="term" value="F:structural constituent of ribosome"/>
    <property type="evidence" value="ECO:0007669"/>
    <property type="project" value="InterPro"/>
</dbReference>
<dbReference type="GO" id="GO:0000027">
    <property type="term" value="P:ribosomal large subunit assembly"/>
    <property type="evidence" value="ECO:0007669"/>
    <property type="project" value="UniProtKB-UniRule"/>
</dbReference>
<dbReference type="GO" id="GO:0006412">
    <property type="term" value="P:translation"/>
    <property type="evidence" value="ECO:0007669"/>
    <property type="project" value="InterPro"/>
</dbReference>
<dbReference type="CDD" id="cd07026">
    <property type="entry name" value="Ribosomal_L20"/>
    <property type="match status" value="1"/>
</dbReference>
<dbReference type="FunFam" id="1.10.1900.20:FF:000001">
    <property type="entry name" value="50S ribosomal protein L20"/>
    <property type="match status" value="1"/>
</dbReference>
<dbReference type="Gene3D" id="6.10.160.10">
    <property type="match status" value="1"/>
</dbReference>
<dbReference type="Gene3D" id="1.10.1900.20">
    <property type="entry name" value="Ribosomal protein L20"/>
    <property type="match status" value="1"/>
</dbReference>
<dbReference type="HAMAP" id="MF_00382">
    <property type="entry name" value="Ribosomal_bL20"/>
    <property type="match status" value="1"/>
</dbReference>
<dbReference type="InterPro" id="IPR005813">
    <property type="entry name" value="Ribosomal_bL20"/>
</dbReference>
<dbReference type="InterPro" id="IPR049946">
    <property type="entry name" value="RIBOSOMAL_L20_CS"/>
</dbReference>
<dbReference type="InterPro" id="IPR035566">
    <property type="entry name" value="Ribosomal_protein_bL20_C"/>
</dbReference>
<dbReference type="NCBIfam" id="TIGR01032">
    <property type="entry name" value="rplT_bact"/>
    <property type="match status" value="1"/>
</dbReference>
<dbReference type="PANTHER" id="PTHR10986">
    <property type="entry name" value="39S RIBOSOMAL PROTEIN L20"/>
    <property type="match status" value="1"/>
</dbReference>
<dbReference type="Pfam" id="PF00453">
    <property type="entry name" value="Ribosomal_L20"/>
    <property type="match status" value="1"/>
</dbReference>
<dbReference type="PRINTS" id="PR00062">
    <property type="entry name" value="RIBOSOMALL20"/>
</dbReference>
<dbReference type="SUPFAM" id="SSF74731">
    <property type="entry name" value="Ribosomal protein L20"/>
    <property type="match status" value="1"/>
</dbReference>
<dbReference type="PROSITE" id="PS00937">
    <property type="entry name" value="RIBOSOMAL_L20"/>
    <property type="match status" value="1"/>
</dbReference>
<gene>
    <name evidence="1" type="primary">rplT</name>
    <name type="ordered locus">CGSHiGG_01295</name>
</gene>
<evidence type="ECO:0000255" key="1">
    <source>
        <dbReference type="HAMAP-Rule" id="MF_00382"/>
    </source>
</evidence>
<evidence type="ECO:0000305" key="2"/>
<reference key="1">
    <citation type="journal article" date="2007" name="Genome Biol.">
        <title>Characterization and modeling of the Haemophilus influenzae core and supragenomes based on the complete genomic sequences of Rd and 12 clinical nontypeable strains.</title>
        <authorList>
            <person name="Hogg J.S."/>
            <person name="Hu F.Z."/>
            <person name="Janto B."/>
            <person name="Boissy R."/>
            <person name="Hayes J."/>
            <person name="Keefe R."/>
            <person name="Post J.C."/>
            <person name="Ehrlich G.D."/>
        </authorList>
    </citation>
    <scope>NUCLEOTIDE SEQUENCE [LARGE SCALE GENOMIC DNA]</scope>
    <source>
        <strain>PittGG</strain>
    </source>
</reference>
<protein>
    <recommendedName>
        <fullName evidence="1">Large ribosomal subunit protein bL20</fullName>
    </recommendedName>
    <alternativeName>
        <fullName evidence="2">50S ribosomal protein L20</fullName>
    </alternativeName>
</protein>